<keyword id="KW-0002">3D-structure</keyword>
<keyword id="KW-0378">Hydrolase</keyword>
<keyword id="KW-0460">Magnesium</keyword>
<keyword id="KW-1185">Reference proteome</keyword>
<evidence type="ECO:0000255" key="1">
    <source>
        <dbReference type="HAMAP-Rule" id="MF_01846"/>
    </source>
</evidence>
<evidence type="ECO:0007829" key="2">
    <source>
        <dbReference type="PDB" id="3N77"/>
    </source>
</evidence>
<evidence type="ECO:0007829" key="3">
    <source>
        <dbReference type="PDB" id="3OGA"/>
    </source>
</evidence>
<accession>Q8ZNF5</accession>
<protein>
    <recommendedName>
        <fullName evidence="1">Nucleoside triphosphatase NudI</fullName>
        <ecNumber evidence="1">3.6.1.9</ecNumber>
    </recommendedName>
    <alternativeName>
        <fullName evidence="1">Nucleotide diphosphatase NudI</fullName>
    </alternativeName>
    <alternativeName>
        <fullName evidence="1">Pyrimidine deoxynucleoside triphosphate diphosphatase</fullName>
    </alternativeName>
    <alternativeName>
        <fullName evidence="1">dCTP diphosphatase</fullName>
        <ecNumber evidence="1">3.6.1.12</ecNumber>
    </alternativeName>
    <alternativeName>
        <fullName evidence="1">dTTP diphosphatase</fullName>
        <ecNumber evidence="1">3.6.1.-</ecNumber>
    </alternativeName>
    <alternativeName>
        <fullName evidence="1">dUTP diphosphatase</fullName>
        <ecNumber evidence="1">3.6.1.23</ecNumber>
    </alternativeName>
</protein>
<gene>
    <name evidence="1" type="primary">nudI</name>
    <name type="ordered locus">STM2295</name>
</gene>
<reference key="1">
    <citation type="journal article" date="2001" name="Nature">
        <title>Complete genome sequence of Salmonella enterica serovar Typhimurium LT2.</title>
        <authorList>
            <person name="McClelland M."/>
            <person name="Sanderson K.E."/>
            <person name="Spieth J."/>
            <person name="Clifton S.W."/>
            <person name="Latreille P."/>
            <person name="Courtney L."/>
            <person name="Porwollik S."/>
            <person name="Ali J."/>
            <person name="Dante M."/>
            <person name="Du F."/>
            <person name="Hou S."/>
            <person name="Layman D."/>
            <person name="Leonard S."/>
            <person name="Nguyen C."/>
            <person name="Scott K."/>
            <person name="Holmes A."/>
            <person name="Grewal N."/>
            <person name="Mulvaney E."/>
            <person name="Ryan E."/>
            <person name="Sun H."/>
            <person name="Florea L."/>
            <person name="Miller W."/>
            <person name="Stoneking T."/>
            <person name="Nhan M."/>
            <person name="Waterston R."/>
            <person name="Wilson R.K."/>
        </authorList>
    </citation>
    <scope>NUCLEOTIDE SEQUENCE [LARGE SCALE GENOMIC DNA]</scope>
    <source>
        <strain>LT2 / SGSC1412 / ATCC 700720</strain>
    </source>
</reference>
<proteinExistence type="evidence at protein level"/>
<dbReference type="EC" id="3.6.1.9" evidence="1"/>
<dbReference type="EC" id="3.6.1.12" evidence="1"/>
<dbReference type="EC" id="3.6.1.-" evidence="1"/>
<dbReference type="EC" id="3.6.1.23" evidence="1"/>
<dbReference type="EMBL" id="AE006468">
    <property type="protein sequence ID" value="AAL21196.1"/>
    <property type="molecule type" value="Genomic_DNA"/>
</dbReference>
<dbReference type="RefSeq" id="WP_001249900.1">
    <property type="nucleotide sequence ID" value="NC_003197.2"/>
</dbReference>
<dbReference type="PDB" id="3N77">
    <property type="method" value="X-ray"/>
    <property type="resolution" value="1.86 A"/>
    <property type="chains" value="A/B=1-141"/>
</dbReference>
<dbReference type="PDB" id="3OGA">
    <property type="method" value="X-ray"/>
    <property type="resolution" value="1.75 A"/>
    <property type="chains" value="A/B=1-141"/>
</dbReference>
<dbReference type="PDBsum" id="3N77"/>
<dbReference type="PDBsum" id="3OGA"/>
<dbReference type="SMR" id="Q8ZNF5"/>
<dbReference type="STRING" id="99287.STM2295"/>
<dbReference type="PaxDb" id="99287-STM2295"/>
<dbReference type="KEGG" id="stm:STM2295"/>
<dbReference type="PATRIC" id="fig|99287.12.peg.2429"/>
<dbReference type="HOGENOM" id="CLU_037162_31_0_6"/>
<dbReference type="OMA" id="EFDDYAW"/>
<dbReference type="PhylomeDB" id="Q8ZNF5"/>
<dbReference type="BioCyc" id="SENT99287:STM2295-MONOMER"/>
<dbReference type="EvolutionaryTrace" id="Q8ZNF5"/>
<dbReference type="Proteomes" id="UP000001014">
    <property type="component" value="Chromosome"/>
</dbReference>
<dbReference type="GO" id="GO:0005737">
    <property type="term" value="C:cytoplasm"/>
    <property type="evidence" value="ECO:0000318"/>
    <property type="project" value="GO_Central"/>
</dbReference>
<dbReference type="GO" id="GO:0047840">
    <property type="term" value="F:dCTP diphosphatase activity"/>
    <property type="evidence" value="ECO:0007669"/>
    <property type="project" value="UniProtKB-EC"/>
</dbReference>
<dbReference type="GO" id="GO:0036218">
    <property type="term" value="F:dTTP diphosphatase activity"/>
    <property type="evidence" value="ECO:0007669"/>
    <property type="project" value="RHEA"/>
</dbReference>
<dbReference type="GO" id="GO:0004170">
    <property type="term" value="F:dUTP diphosphatase activity"/>
    <property type="evidence" value="ECO:0007669"/>
    <property type="project" value="UniProtKB-EC"/>
</dbReference>
<dbReference type="GO" id="GO:0016818">
    <property type="term" value="F:hydrolase activity, acting on acid anhydrides, in phosphorus-containing anhydrides"/>
    <property type="evidence" value="ECO:0000318"/>
    <property type="project" value="GO_Central"/>
</dbReference>
<dbReference type="GO" id="GO:0000287">
    <property type="term" value="F:magnesium ion binding"/>
    <property type="evidence" value="ECO:0007669"/>
    <property type="project" value="UniProtKB-UniRule"/>
</dbReference>
<dbReference type="CDD" id="cd04696">
    <property type="entry name" value="NUDIX_NudI"/>
    <property type="match status" value="1"/>
</dbReference>
<dbReference type="Gene3D" id="3.90.79.10">
    <property type="entry name" value="Nucleoside Triphosphate Pyrophosphohydrolase"/>
    <property type="match status" value="1"/>
</dbReference>
<dbReference type="HAMAP" id="MF_01846">
    <property type="entry name" value="Nudix_NudI"/>
    <property type="match status" value="1"/>
</dbReference>
<dbReference type="InterPro" id="IPR023781">
    <property type="entry name" value="Nucleoside_triphosphatase_NudI"/>
</dbReference>
<dbReference type="InterPro" id="IPR020476">
    <property type="entry name" value="Nudix_hydrolase"/>
</dbReference>
<dbReference type="InterPro" id="IPR015797">
    <property type="entry name" value="NUDIX_hydrolase-like_dom_sf"/>
</dbReference>
<dbReference type="InterPro" id="IPR020084">
    <property type="entry name" value="NUDIX_hydrolase_CS"/>
</dbReference>
<dbReference type="InterPro" id="IPR000086">
    <property type="entry name" value="NUDIX_hydrolase_dom"/>
</dbReference>
<dbReference type="NCBIfam" id="NF012016">
    <property type="entry name" value="PRK15472.1"/>
    <property type="match status" value="1"/>
</dbReference>
<dbReference type="PANTHER" id="PTHR43046">
    <property type="entry name" value="GDP-MANNOSE MANNOSYL HYDROLASE"/>
    <property type="match status" value="1"/>
</dbReference>
<dbReference type="PANTHER" id="PTHR43046:SF14">
    <property type="entry name" value="MUTT_NUDIX FAMILY PROTEIN"/>
    <property type="match status" value="1"/>
</dbReference>
<dbReference type="Pfam" id="PF00293">
    <property type="entry name" value="NUDIX"/>
    <property type="match status" value="1"/>
</dbReference>
<dbReference type="PRINTS" id="PR00502">
    <property type="entry name" value="NUDIXFAMILY"/>
</dbReference>
<dbReference type="SUPFAM" id="SSF55811">
    <property type="entry name" value="Nudix"/>
    <property type="match status" value="1"/>
</dbReference>
<dbReference type="PROSITE" id="PS51462">
    <property type="entry name" value="NUDIX"/>
    <property type="match status" value="1"/>
</dbReference>
<dbReference type="PROSITE" id="PS00893">
    <property type="entry name" value="NUDIX_BOX"/>
    <property type="match status" value="1"/>
</dbReference>
<comment type="function">
    <text evidence="1">Catalyzes the hydrolysis of nucleoside triphosphates, with a preference for pyrimidine deoxynucleoside triphosphates (dUTP, dTTP and dCTP).</text>
</comment>
<comment type="catalytic activity">
    <reaction evidence="1">
        <text>a ribonucleoside 5'-triphosphate + H2O = a ribonucleoside 5'-phosphate + diphosphate + H(+)</text>
        <dbReference type="Rhea" id="RHEA:23996"/>
        <dbReference type="ChEBI" id="CHEBI:15377"/>
        <dbReference type="ChEBI" id="CHEBI:15378"/>
        <dbReference type="ChEBI" id="CHEBI:33019"/>
        <dbReference type="ChEBI" id="CHEBI:58043"/>
        <dbReference type="ChEBI" id="CHEBI:61557"/>
        <dbReference type="EC" id="3.6.1.9"/>
    </reaction>
</comment>
<comment type="catalytic activity">
    <reaction evidence="1">
        <text>a 2'-deoxyribonucleoside 5'-triphosphate + H2O = a 2'-deoxyribonucleoside 5'-phosphate + diphosphate + H(+)</text>
        <dbReference type="Rhea" id="RHEA:44644"/>
        <dbReference type="ChEBI" id="CHEBI:15377"/>
        <dbReference type="ChEBI" id="CHEBI:15378"/>
        <dbReference type="ChEBI" id="CHEBI:33019"/>
        <dbReference type="ChEBI" id="CHEBI:61560"/>
        <dbReference type="ChEBI" id="CHEBI:65317"/>
        <dbReference type="EC" id="3.6.1.9"/>
    </reaction>
</comment>
<comment type="catalytic activity">
    <reaction evidence="1">
        <text>dUTP + H2O = dUMP + diphosphate + H(+)</text>
        <dbReference type="Rhea" id="RHEA:10248"/>
        <dbReference type="ChEBI" id="CHEBI:15377"/>
        <dbReference type="ChEBI" id="CHEBI:15378"/>
        <dbReference type="ChEBI" id="CHEBI:33019"/>
        <dbReference type="ChEBI" id="CHEBI:61555"/>
        <dbReference type="ChEBI" id="CHEBI:246422"/>
        <dbReference type="EC" id="3.6.1.9"/>
    </reaction>
</comment>
<comment type="catalytic activity">
    <reaction evidence="1">
        <text>dUTP + H2O = dUMP + diphosphate + H(+)</text>
        <dbReference type="Rhea" id="RHEA:10248"/>
        <dbReference type="ChEBI" id="CHEBI:15377"/>
        <dbReference type="ChEBI" id="CHEBI:15378"/>
        <dbReference type="ChEBI" id="CHEBI:33019"/>
        <dbReference type="ChEBI" id="CHEBI:61555"/>
        <dbReference type="ChEBI" id="CHEBI:246422"/>
        <dbReference type="EC" id="3.6.1.23"/>
    </reaction>
</comment>
<comment type="catalytic activity">
    <reaction evidence="1">
        <text>dTTP + H2O = dTMP + diphosphate + H(+)</text>
        <dbReference type="Rhea" id="RHEA:28534"/>
        <dbReference type="ChEBI" id="CHEBI:15377"/>
        <dbReference type="ChEBI" id="CHEBI:15378"/>
        <dbReference type="ChEBI" id="CHEBI:33019"/>
        <dbReference type="ChEBI" id="CHEBI:37568"/>
        <dbReference type="ChEBI" id="CHEBI:63528"/>
        <dbReference type="EC" id="3.6.1.9"/>
    </reaction>
</comment>
<comment type="catalytic activity">
    <reaction evidence="1">
        <text>dCTP + H2O = dCMP + diphosphate + H(+)</text>
        <dbReference type="Rhea" id="RHEA:22636"/>
        <dbReference type="ChEBI" id="CHEBI:15377"/>
        <dbReference type="ChEBI" id="CHEBI:15378"/>
        <dbReference type="ChEBI" id="CHEBI:33019"/>
        <dbReference type="ChEBI" id="CHEBI:57566"/>
        <dbReference type="ChEBI" id="CHEBI:61481"/>
        <dbReference type="EC" id="3.6.1.9"/>
    </reaction>
</comment>
<comment type="catalytic activity">
    <reaction evidence="1">
        <text>dCTP + H2O = dCMP + diphosphate + H(+)</text>
        <dbReference type="Rhea" id="RHEA:22636"/>
        <dbReference type="ChEBI" id="CHEBI:15377"/>
        <dbReference type="ChEBI" id="CHEBI:15378"/>
        <dbReference type="ChEBI" id="CHEBI:33019"/>
        <dbReference type="ChEBI" id="CHEBI:57566"/>
        <dbReference type="ChEBI" id="CHEBI:61481"/>
        <dbReference type="EC" id="3.6.1.12"/>
    </reaction>
</comment>
<comment type="cofactor">
    <cofactor evidence="1">
        <name>Mg(2+)</name>
        <dbReference type="ChEBI" id="CHEBI:18420"/>
    </cofactor>
</comment>
<comment type="subunit">
    <text evidence="1">Monomer.</text>
</comment>
<comment type="similarity">
    <text evidence="1">Belongs to the Nudix hydrolase family. NudI subfamily.</text>
</comment>
<feature type="chain" id="PRO_0000342140" description="Nucleoside triphosphatase NudI">
    <location>
        <begin position="1"/>
        <end position="141"/>
    </location>
</feature>
<feature type="domain" description="Nudix hydrolase" evidence="1">
    <location>
        <begin position="1"/>
        <end position="141"/>
    </location>
</feature>
<feature type="short sequence motif" description="Nudix box">
    <location>
        <begin position="38"/>
        <end position="59"/>
    </location>
</feature>
<feature type="strand" evidence="3">
    <location>
        <begin position="2"/>
        <end position="13"/>
    </location>
</feature>
<feature type="strand" evidence="3">
    <location>
        <begin position="16"/>
        <end position="22"/>
    </location>
</feature>
<feature type="turn" evidence="2">
    <location>
        <begin position="27"/>
        <end position="31"/>
    </location>
</feature>
<feature type="helix" evidence="3">
    <location>
        <begin position="46"/>
        <end position="58"/>
    </location>
</feature>
<feature type="strand" evidence="3">
    <location>
        <begin position="64"/>
        <end position="80"/>
    </location>
</feature>
<feature type="strand" evidence="3">
    <location>
        <begin position="86"/>
        <end position="101"/>
    </location>
</feature>
<feature type="strand" evidence="3">
    <location>
        <begin position="111"/>
        <end position="117"/>
    </location>
</feature>
<feature type="helix" evidence="3">
    <location>
        <begin position="119"/>
        <end position="124"/>
    </location>
</feature>
<feature type="helix" evidence="3">
    <location>
        <begin position="129"/>
        <end position="137"/>
    </location>
</feature>
<name>NUDI_SALTY</name>
<sequence length="141" mass="16302">MRQRTIVCPLIQNDGCYLLCKMADNRGVFPGQWALSGGGVEPGERIEEALRREIREELGEQLILSDITPWTFRDDIRIKTYADGRQEEIYMIYLIFDCVSANRDICINDEFQDYAWVKPEELALYDLNVATRHTLALKGLL</sequence>
<organism>
    <name type="scientific">Salmonella typhimurium (strain LT2 / SGSC1412 / ATCC 700720)</name>
    <dbReference type="NCBI Taxonomy" id="99287"/>
    <lineage>
        <taxon>Bacteria</taxon>
        <taxon>Pseudomonadati</taxon>
        <taxon>Pseudomonadota</taxon>
        <taxon>Gammaproteobacteria</taxon>
        <taxon>Enterobacterales</taxon>
        <taxon>Enterobacteriaceae</taxon>
        <taxon>Salmonella</taxon>
    </lineage>
</organism>